<feature type="chain" id="PRO_0000400182" description="1D-myo-inositol 2-acetamido-2-deoxy-alpha-D-glucopyranoside deacetylase">
    <location>
        <begin position="1"/>
        <end position="335"/>
    </location>
</feature>
<feature type="binding site" evidence="1">
    <location>
        <position position="19"/>
    </location>
    <ligand>
        <name>Zn(2+)</name>
        <dbReference type="ChEBI" id="CHEBI:29105"/>
    </ligand>
</feature>
<feature type="binding site" evidence="1">
    <location>
        <position position="22"/>
    </location>
    <ligand>
        <name>Zn(2+)</name>
        <dbReference type="ChEBI" id="CHEBI:29105"/>
    </ligand>
</feature>
<feature type="binding site" evidence="1">
    <location>
        <position position="158"/>
    </location>
    <ligand>
        <name>Zn(2+)</name>
        <dbReference type="ChEBI" id="CHEBI:29105"/>
    </ligand>
</feature>
<evidence type="ECO:0000255" key="1">
    <source>
        <dbReference type="HAMAP-Rule" id="MF_01696"/>
    </source>
</evidence>
<proteinExistence type="inferred from homology"/>
<dbReference type="EC" id="3.5.1.103" evidence="1"/>
<dbReference type="EMBL" id="AM942444">
    <property type="protein sequence ID" value="CAQ04620.1"/>
    <property type="molecule type" value="Genomic_DNA"/>
</dbReference>
<dbReference type="RefSeq" id="WP_012359911.1">
    <property type="nucleotide sequence ID" value="NC_010545.1"/>
</dbReference>
<dbReference type="SMR" id="B1VFT1"/>
<dbReference type="STRING" id="504474.cu0660"/>
<dbReference type="GeneID" id="60603436"/>
<dbReference type="KEGG" id="cur:cu0660"/>
<dbReference type="eggNOG" id="COG2120">
    <property type="taxonomic scope" value="Bacteria"/>
</dbReference>
<dbReference type="HOGENOM" id="CLU_049311_2_1_11"/>
<dbReference type="Proteomes" id="UP000001727">
    <property type="component" value="Chromosome"/>
</dbReference>
<dbReference type="GO" id="GO:0035595">
    <property type="term" value="F:N-acetylglucosaminylinositol deacetylase activity"/>
    <property type="evidence" value="ECO:0007669"/>
    <property type="project" value="UniProtKB-EC"/>
</dbReference>
<dbReference type="GO" id="GO:0008270">
    <property type="term" value="F:zinc ion binding"/>
    <property type="evidence" value="ECO:0007669"/>
    <property type="project" value="UniProtKB-UniRule"/>
</dbReference>
<dbReference type="GO" id="GO:0010125">
    <property type="term" value="P:mycothiol biosynthetic process"/>
    <property type="evidence" value="ECO:0007669"/>
    <property type="project" value="UniProtKB-UniRule"/>
</dbReference>
<dbReference type="Gene3D" id="3.40.50.10320">
    <property type="entry name" value="LmbE-like"/>
    <property type="match status" value="1"/>
</dbReference>
<dbReference type="HAMAP" id="MF_01696">
    <property type="entry name" value="MshB"/>
    <property type="match status" value="1"/>
</dbReference>
<dbReference type="InterPro" id="IPR003737">
    <property type="entry name" value="GlcNAc_PI_deacetylase-related"/>
</dbReference>
<dbReference type="InterPro" id="IPR024078">
    <property type="entry name" value="LmbE-like_dom_sf"/>
</dbReference>
<dbReference type="InterPro" id="IPR017810">
    <property type="entry name" value="Mycothiol_biosynthesis_MshB"/>
</dbReference>
<dbReference type="NCBIfam" id="TIGR03445">
    <property type="entry name" value="mycothiol_MshB"/>
    <property type="match status" value="1"/>
</dbReference>
<dbReference type="PANTHER" id="PTHR12993:SF26">
    <property type="entry name" value="1D-MYO-INOSITOL 2-ACETAMIDO-2-DEOXY-ALPHA-D-GLUCOPYRANOSIDE DEACETYLASE"/>
    <property type="match status" value="1"/>
</dbReference>
<dbReference type="PANTHER" id="PTHR12993">
    <property type="entry name" value="N-ACETYLGLUCOSAMINYL-PHOSPHATIDYLINOSITOL DE-N-ACETYLASE-RELATED"/>
    <property type="match status" value="1"/>
</dbReference>
<dbReference type="Pfam" id="PF02585">
    <property type="entry name" value="PIG-L"/>
    <property type="match status" value="1"/>
</dbReference>
<dbReference type="SUPFAM" id="SSF102588">
    <property type="entry name" value="LmbE-like"/>
    <property type="match status" value="1"/>
</dbReference>
<name>MSHB_CORU7</name>
<gene>
    <name evidence="1" type="primary">mshB</name>
    <name type="ordered locus">cu0660</name>
</gene>
<protein>
    <recommendedName>
        <fullName evidence="1">1D-myo-inositol 2-acetamido-2-deoxy-alpha-D-glucopyranoside deacetylase</fullName>
        <shortName evidence="1">GlcNAc-Ins deacetylase</shortName>
        <ecNumber evidence="1">3.5.1.103</ecNumber>
    </recommendedName>
    <alternativeName>
        <fullName>N-acetyl-1-D-myo-inositol 2-amino-2-deoxy-alpha-D-glucopyranoside deacetylase</fullName>
    </alternativeName>
</protein>
<keyword id="KW-0378">Hydrolase</keyword>
<keyword id="KW-0479">Metal-binding</keyword>
<keyword id="KW-1185">Reference proteome</keyword>
<keyword id="KW-0862">Zinc</keyword>
<reference key="1">
    <citation type="journal article" date="2008" name="J. Biotechnol.">
        <title>The lifestyle of Corynebacterium urealyticum derived from its complete genome sequence established by pyrosequencing.</title>
        <authorList>
            <person name="Tauch A."/>
            <person name="Trost E."/>
            <person name="Tilker A."/>
            <person name="Ludewig U."/>
            <person name="Schneiker S."/>
            <person name="Goesmann A."/>
            <person name="Arnold W."/>
            <person name="Bekel T."/>
            <person name="Brinkrolf K."/>
            <person name="Brune I."/>
            <person name="Goetker S."/>
            <person name="Kalinowski J."/>
            <person name="Kamp P.-B."/>
            <person name="Lobo F.P."/>
            <person name="Viehoever P."/>
            <person name="Weisshaar B."/>
            <person name="Soriano F."/>
            <person name="Droege M."/>
            <person name="Puehler A."/>
        </authorList>
    </citation>
    <scope>NUCLEOTIDE SEQUENCE [LARGE SCALE GENOMIC DNA]</scope>
    <source>
        <strain>ATCC 43042 / DSM 7109</strain>
    </source>
</reference>
<accession>B1VFT1</accession>
<organism>
    <name type="scientific">Corynebacterium urealyticum (strain ATCC 43042 / DSM 7109)</name>
    <dbReference type="NCBI Taxonomy" id="504474"/>
    <lineage>
        <taxon>Bacteria</taxon>
        <taxon>Bacillati</taxon>
        <taxon>Actinomycetota</taxon>
        <taxon>Actinomycetes</taxon>
        <taxon>Mycobacteriales</taxon>
        <taxon>Corynebacteriaceae</taxon>
        <taxon>Corynebacterium</taxon>
    </lineage>
</organism>
<comment type="function">
    <text evidence="1">Catalyzes the deacetylation of 1D-myo-inositol 2-acetamido-2-deoxy-alpha-D-glucopyranoside (GlcNAc-Ins) in the mycothiol biosynthesis pathway.</text>
</comment>
<comment type="catalytic activity">
    <reaction evidence="1">
        <text>1D-myo-inositol 2-acetamido-2-deoxy-alpha-D-glucopyranoside + H2O = 1D-myo-inositol 2-amino-2-deoxy-alpha-D-glucopyranoside + acetate</text>
        <dbReference type="Rhea" id="RHEA:26180"/>
        <dbReference type="ChEBI" id="CHEBI:15377"/>
        <dbReference type="ChEBI" id="CHEBI:30089"/>
        <dbReference type="ChEBI" id="CHEBI:52442"/>
        <dbReference type="ChEBI" id="CHEBI:58886"/>
        <dbReference type="EC" id="3.5.1.103"/>
    </reaction>
</comment>
<comment type="cofactor">
    <cofactor evidence="1">
        <name>Zn(2+)</name>
        <dbReference type="ChEBI" id="CHEBI:29105"/>
    </cofactor>
    <text evidence="1">Binds 1 zinc ion per subunit.</text>
</comment>
<comment type="similarity">
    <text evidence="1">Belongs to the MshB deacetylase family.</text>
</comment>
<sequence length="335" mass="36526">MTKHATHAAPQRVLFVHAHPDDESLFTGLLVSASSRVGAETSVLTCTLGEEGEVIGEKYQNLTSEHSDLLGGFRIGELQQALEHLGVHQGPQFLGGPSRWRDSGMADTPTIRHPRAFAGDSEDNWELQVEQLLAVLRRERPEVLVTYGPDGGYGHPDHIRAHRVTHEAVRRLVDAGEEAAPHEIWWAVTPAGAFHAAMTGVEIPEGWREAEDGDVALVAEEFIDAFVQGTPEDVAAKRKAMAAHATQLWVADGTRTDVNPEARDTTTPTGEYLFALSNLISQPILPVEGYQLGWVKNADPNTNRQISLLHFDFVVPSNGTAQEHGNDGKVRGENG</sequence>